<evidence type="ECO:0000250" key="1"/>
<evidence type="ECO:0000250" key="2">
    <source>
        <dbReference type="UniProtKB" id="Q9PW66"/>
    </source>
</evidence>
<evidence type="ECO:0000255" key="3"/>
<evidence type="ECO:0000305" key="4"/>
<evidence type="ECO:0000312" key="5">
    <source>
        <dbReference type="EMBL" id="ADB56837.1"/>
    </source>
</evidence>
<sequence>MKVVLIVCLVWVMAMMELVSCECWSQADCSVGHCCAGSSFSKNCRPYGGDGEQCEPRNKYEVYSTGCPCEENLMCSVINRCQSA</sequence>
<keyword id="KW-1015">Disulfide bond</keyword>
<keyword id="KW-0964">Secreted</keyword>
<keyword id="KW-0732">Signal</keyword>
<keyword id="KW-0800">Toxin</keyword>
<comment type="subcellular location">
    <subcellularLocation>
        <location evidence="1">Secreted</location>
    </subcellularLocation>
</comment>
<comment type="tissue specificity">
    <text>Expressed by the venom gland.</text>
</comment>
<comment type="similarity">
    <text evidence="4">Belongs to the AVIT (prokineticin) family.</text>
</comment>
<protein>
    <recommendedName>
        <fullName>U8-theraphotoxin-Hhn1d</fullName>
        <shortName>U8-TRTX-Hhn1d</shortName>
    </recommendedName>
    <alternativeName>
        <fullName evidence="5">Hainantoxin-XIV-4</fullName>
        <shortName evidence="5">HNTX-XIV-4</shortName>
    </alternativeName>
</protein>
<feature type="signal peptide" evidence="3">
    <location>
        <begin position="1"/>
        <end position="21"/>
    </location>
</feature>
<feature type="chain" id="PRO_0000400852" description="U8-theraphotoxin-Hhn1d">
    <location>
        <begin position="22"/>
        <end position="84"/>
    </location>
</feature>
<feature type="disulfide bond" evidence="2">
    <location>
        <begin position="23"/>
        <end position="35"/>
    </location>
</feature>
<feature type="disulfide bond" evidence="2">
    <location>
        <begin position="29"/>
        <end position="44"/>
    </location>
</feature>
<feature type="disulfide bond" evidence="2">
    <location>
        <begin position="34"/>
        <end position="67"/>
    </location>
</feature>
<feature type="disulfide bond" evidence="2">
    <location>
        <begin position="54"/>
        <end position="75"/>
    </location>
</feature>
<feature type="disulfide bond" evidence="2">
    <location>
        <begin position="69"/>
        <end position="81"/>
    </location>
</feature>
<proteinExistence type="evidence at transcript level"/>
<accession>D2Y2E4</accession>
<name>H14D1_CYRHA</name>
<reference key="1">
    <citation type="journal article" date="2010" name="J. Proteome Res.">
        <title>Molecular diversification of peptide toxins from the tarantula Haplopelma hainanum (Ornithoctonus hainana) venom based on transcriptomic, peptidomic, and genomic analyses.</title>
        <authorList>
            <person name="Tang X."/>
            <person name="Zhang Y."/>
            <person name="Hu W."/>
            <person name="Xu D."/>
            <person name="Tao H."/>
            <person name="Yang X."/>
            <person name="Li Y."/>
            <person name="Jiang L."/>
            <person name="Liang S."/>
        </authorList>
    </citation>
    <scope>NUCLEOTIDE SEQUENCE [LARGE SCALE MRNA]</scope>
    <source>
        <tissue>Venom gland</tissue>
    </source>
</reference>
<organism>
    <name type="scientific">Cyriopagopus hainanus</name>
    <name type="common">Chinese bird spider</name>
    <name type="synonym">Haplopelma hainanum</name>
    <dbReference type="NCBI Taxonomy" id="209901"/>
    <lineage>
        <taxon>Eukaryota</taxon>
        <taxon>Metazoa</taxon>
        <taxon>Ecdysozoa</taxon>
        <taxon>Arthropoda</taxon>
        <taxon>Chelicerata</taxon>
        <taxon>Arachnida</taxon>
        <taxon>Araneae</taxon>
        <taxon>Mygalomorphae</taxon>
        <taxon>Theraphosidae</taxon>
        <taxon>Haplopelma</taxon>
    </lineage>
</organism>
<dbReference type="EMBL" id="GU293021">
    <property type="protein sequence ID" value="ADB56837.1"/>
    <property type="molecule type" value="mRNA"/>
</dbReference>
<dbReference type="SMR" id="D2Y2E4"/>
<dbReference type="TCDB" id="8.B.10.1.5">
    <property type="family name" value="the psalmotoxin-1 (pctx1) family"/>
</dbReference>
<dbReference type="ArachnoServer" id="AS001629">
    <property type="toxin name" value="U8-theraphotoxin-Hhn1d"/>
</dbReference>
<dbReference type="GO" id="GO:0005576">
    <property type="term" value="C:extracellular region"/>
    <property type="evidence" value="ECO:0007669"/>
    <property type="project" value="UniProtKB-SubCell"/>
</dbReference>
<dbReference type="GO" id="GO:0090729">
    <property type="term" value="F:toxin activity"/>
    <property type="evidence" value="ECO:0007669"/>
    <property type="project" value="UniProtKB-KW"/>
</dbReference>
<dbReference type="Gene3D" id="2.10.80.10">
    <property type="entry name" value="Lipase, subunit A"/>
    <property type="match status" value="1"/>
</dbReference>
<dbReference type="InterPro" id="IPR023569">
    <property type="entry name" value="Prokineticin_domain"/>
</dbReference>
<dbReference type="Pfam" id="PF06607">
    <property type="entry name" value="Prokineticin"/>
    <property type="match status" value="1"/>
</dbReference>